<protein>
    <recommendedName>
        <fullName>U3 small nucleolar RNA-associated protein 25</fullName>
        <shortName>U3 snoRNA-associated protein 25</shortName>
    </recommendedName>
    <alternativeName>
        <fullName>U three protein 25</fullName>
    </alternativeName>
</protein>
<name>UTP25_VANPO</name>
<accession>A7THH1</accession>
<keyword id="KW-0539">Nucleus</keyword>
<keyword id="KW-1185">Reference proteome</keyword>
<keyword id="KW-0687">Ribonucleoprotein</keyword>
<keyword id="KW-0690">Ribosome biogenesis</keyword>
<keyword id="KW-0698">rRNA processing</keyword>
<feature type="chain" id="PRO_0000408144" description="U3 small nucleolar RNA-associated protein 25">
    <location>
        <begin position="1"/>
        <end position="704"/>
    </location>
</feature>
<feature type="region of interest" description="Disordered" evidence="2">
    <location>
        <begin position="1"/>
        <end position="140"/>
    </location>
</feature>
<feature type="compositionally biased region" description="Basic and acidic residues" evidence="2">
    <location>
        <begin position="10"/>
        <end position="21"/>
    </location>
</feature>
<feature type="compositionally biased region" description="Basic and acidic residues" evidence="2">
    <location>
        <begin position="31"/>
        <end position="41"/>
    </location>
</feature>
<feature type="compositionally biased region" description="Acidic residues" evidence="2">
    <location>
        <begin position="42"/>
        <end position="58"/>
    </location>
</feature>
<feature type="compositionally biased region" description="Acidic residues" evidence="2">
    <location>
        <begin position="101"/>
        <end position="139"/>
    </location>
</feature>
<reference key="1">
    <citation type="journal article" date="2007" name="Proc. Natl. Acad. Sci. U.S.A.">
        <title>Independent sorting-out of thousands of duplicated gene pairs in two yeast species descended from a whole-genome duplication.</title>
        <authorList>
            <person name="Scannell D.R."/>
            <person name="Frank A.C."/>
            <person name="Conant G.C."/>
            <person name="Byrne K.P."/>
            <person name="Woolfit M."/>
            <person name="Wolfe K.H."/>
        </authorList>
    </citation>
    <scope>NUCLEOTIDE SEQUENCE [LARGE SCALE GENOMIC DNA]</scope>
    <source>
        <strain>ATCC 22028 / DSM 70294 / BCRC 21397 / CBS 2163 / NBRC 10782 / NRRL Y-8283 / UCD 57-17</strain>
    </source>
</reference>
<sequence>MARHSGTSEGPKKRGRTELRSIRRPNRSQHSKHDQQVVHESENEDSLESSSDDDEDIAQAEAENSDRKEKVYGALLTILNSEHPERKKHKSHSTDFVKEIDEQEEIEQGMASESEEEDEENDEEESNEGDEEEEEEPTDQLDTFESHFNDVSQDLVDDISAGFKDKQIKYKSMKYSLDKKESAIFGKPLLLTQQDETIDNPVLTSSYDSYFIKQRLKIQNDLLDSSKENLTPLKKKLLDPMFQYKDVLCEYTNYENDEKEYRELYSLHVLNHIYKTRDKILKDNQRLQENDDLECLDQGFTRPKVLIVVPTRDTAYQVVETIIEKSGLDQIDKKGKFKDQFFDDSLPPTSKPKSFRHVFKGNTNDFFVLGMKFTRKAIKLYSNFYQSDIIICSPLGIQMILENTDKKKRQDDFLSSIEVMIVDQLHSIEYQNISHVYTILEHINKIPQQQREADFSRIRMWYINDQAKFLRQTMLFTRYISPTANAIINGKCHNMAGRWKNNQIISSEDSSIGQLGIKIKQIFQRFDLVGGTVVDESDYRFKYFTSVVMQNIVKSTGYEDGILVYIPEYTDYMRLRNYMKEKTTILFSEINEYSTQKQLDSNRSMFQQGRTKVLLYTERLHHYRRYELKGIKSVIFYKPPTNPEFYNEVIRFTAKNAFLGKSDINISTIRTVYSKLDGLALQRIVGSKRAAILCHGQNESYDFK</sequence>
<organism>
    <name type="scientific">Vanderwaltozyma polyspora (strain ATCC 22028 / DSM 70294 / BCRC 21397 / CBS 2163 / NBRC 10782 / NRRL Y-8283 / UCD 57-17)</name>
    <name type="common">Kluyveromyces polysporus</name>
    <dbReference type="NCBI Taxonomy" id="436907"/>
    <lineage>
        <taxon>Eukaryota</taxon>
        <taxon>Fungi</taxon>
        <taxon>Dikarya</taxon>
        <taxon>Ascomycota</taxon>
        <taxon>Saccharomycotina</taxon>
        <taxon>Saccharomycetes</taxon>
        <taxon>Saccharomycetales</taxon>
        <taxon>Saccharomycetaceae</taxon>
        <taxon>Vanderwaltozyma</taxon>
    </lineage>
</organism>
<comment type="function">
    <text evidence="1">DEAD-box RNA helicase-like protein required for pre-18S rRNA processing, specifically at sites A0, A1, and A2.</text>
</comment>
<comment type="subunit">
    <text evidence="1">Component of the ribosomal small subunit (SSU) processome composed of at least 40 protein subunits and snoRNA U3.</text>
</comment>
<comment type="subcellular location">
    <subcellularLocation>
        <location evidence="1">Nucleus</location>
        <location evidence="1">Nucleolus</location>
    </subcellularLocation>
</comment>
<comment type="similarity">
    <text evidence="3">Belongs to the UTP25 family.</text>
</comment>
<evidence type="ECO:0000250" key="1"/>
<evidence type="ECO:0000256" key="2">
    <source>
        <dbReference type="SAM" id="MobiDB-lite"/>
    </source>
</evidence>
<evidence type="ECO:0000305" key="3"/>
<proteinExistence type="inferred from homology"/>
<dbReference type="EMBL" id="DS480391">
    <property type="protein sequence ID" value="EDO18295.1"/>
    <property type="molecule type" value="Genomic_DNA"/>
</dbReference>
<dbReference type="RefSeq" id="XP_001646153.1">
    <property type="nucleotide sequence ID" value="XM_001646103.1"/>
</dbReference>
<dbReference type="FunCoup" id="A7THH1">
    <property type="interactions" value="1303"/>
</dbReference>
<dbReference type="STRING" id="436907.A7THH1"/>
<dbReference type="GeneID" id="5546576"/>
<dbReference type="KEGG" id="vpo:Kpol_1039p46"/>
<dbReference type="eggNOG" id="KOG2340">
    <property type="taxonomic scope" value="Eukaryota"/>
</dbReference>
<dbReference type="HOGENOM" id="CLU_018705_0_1_1"/>
<dbReference type="InParanoid" id="A7THH1"/>
<dbReference type="OMA" id="QDRGDTF"/>
<dbReference type="OrthoDB" id="10264378at2759"/>
<dbReference type="PhylomeDB" id="A7THH1"/>
<dbReference type="Proteomes" id="UP000000267">
    <property type="component" value="Unassembled WGS sequence"/>
</dbReference>
<dbReference type="GO" id="GO:0005730">
    <property type="term" value="C:nucleolus"/>
    <property type="evidence" value="ECO:0007669"/>
    <property type="project" value="UniProtKB-SubCell"/>
</dbReference>
<dbReference type="GO" id="GO:0032040">
    <property type="term" value="C:small-subunit processome"/>
    <property type="evidence" value="ECO:0007669"/>
    <property type="project" value="EnsemblFungi"/>
</dbReference>
<dbReference type="GO" id="GO:0019843">
    <property type="term" value="F:rRNA binding"/>
    <property type="evidence" value="ECO:0007669"/>
    <property type="project" value="EnsemblFungi"/>
</dbReference>
<dbReference type="GO" id="GO:0034511">
    <property type="term" value="F:U3 snoRNA binding"/>
    <property type="evidence" value="ECO:0007669"/>
    <property type="project" value="EnsemblFungi"/>
</dbReference>
<dbReference type="GO" id="GO:0000462">
    <property type="term" value="P:maturation of SSU-rRNA from tricistronic rRNA transcript (SSU-rRNA, 5.8S rRNA, LSU-rRNA)"/>
    <property type="evidence" value="ECO:0007669"/>
    <property type="project" value="EnsemblFungi"/>
</dbReference>
<dbReference type="Gene3D" id="3.40.50.300">
    <property type="entry name" value="P-loop containing nucleotide triphosphate hydrolases"/>
    <property type="match status" value="1"/>
</dbReference>
<dbReference type="InterPro" id="IPR027417">
    <property type="entry name" value="P-loop_NTPase"/>
</dbReference>
<dbReference type="InterPro" id="IPR010678">
    <property type="entry name" value="UTP25"/>
</dbReference>
<dbReference type="InterPro" id="IPR053939">
    <property type="entry name" value="UTP25_C"/>
</dbReference>
<dbReference type="InterPro" id="IPR053940">
    <property type="entry name" value="UTP25_NTPase-like"/>
</dbReference>
<dbReference type="PANTHER" id="PTHR12933">
    <property type="entry name" value="ORF PROTEIN-RELATED"/>
    <property type="match status" value="1"/>
</dbReference>
<dbReference type="PANTHER" id="PTHR12933:SF0">
    <property type="entry name" value="U3 SMALL NUCLEOLAR RNA-ASSOCIATED PROTEIN 25 HOMOLOG"/>
    <property type="match status" value="1"/>
</dbReference>
<dbReference type="Pfam" id="PF06862">
    <property type="entry name" value="Utp25_C"/>
    <property type="match status" value="1"/>
</dbReference>
<dbReference type="Pfam" id="PF22916">
    <property type="entry name" value="UTP25_NTPase-like"/>
    <property type="match status" value="1"/>
</dbReference>
<dbReference type="SUPFAM" id="SSF52540">
    <property type="entry name" value="P-loop containing nucleoside triphosphate hydrolases"/>
    <property type="match status" value="1"/>
</dbReference>
<gene>
    <name type="primary">UTP25</name>
    <name type="ORF">Kpol_1039p46</name>
</gene>